<comment type="function">
    <text evidence="1">This protein is one of the two subunits of integration host factor, a specific DNA-binding protein that functions in genetic recombination as well as in transcriptional and translational control.</text>
</comment>
<comment type="subunit">
    <text>Heterodimer of an alpha and a beta chain.</text>
</comment>
<comment type="similarity">
    <text evidence="3">Belongs to the bacterial histone-like protein family.</text>
</comment>
<evidence type="ECO:0000250" key="1"/>
<evidence type="ECO:0000256" key="2">
    <source>
        <dbReference type="SAM" id="MobiDB-lite"/>
    </source>
</evidence>
<evidence type="ECO:0000305" key="3"/>
<sequence length="100" mass="11332">MTKSELIERIVTHQGLLSSKDVELAIKTMLEQMSQCLATGDRIEIRGFGSFSLHYRAPRVGRNPKTGQSVSLEGKFVPHFKPGKELRDRVNEDEHEEAHT</sequence>
<protein>
    <recommendedName>
        <fullName>Integration host factor subunit beta</fullName>
        <shortName>IHF-beta</shortName>
    </recommendedName>
</protein>
<feature type="chain" id="PRO_0000105061" description="Integration host factor subunit beta">
    <location>
        <begin position="1"/>
        <end position="100"/>
    </location>
</feature>
<feature type="region of interest" description="Disordered" evidence="2">
    <location>
        <begin position="81"/>
        <end position="100"/>
    </location>
</feature>
<feature type="compositionally biased region" description="Basic and acidic residues" evidence="2">
    <location>
        <begin position="82"/>
        <end position="100"/>
    </location>
</feature>
<keyword id="KW-0233">DNA recombination</keyword>
<keyword id="KW-0238">DNA-binding</keyword>
<keyword id="KW-0804">Transcription</keyword>
<keyword id="KW-0805">Transcription regulation</keyword>
<keyword id="KW-0810">Translation regulation</keyword>
<organism>
    <name type="scientific">Pseudomonas putida</name>
    <name type="common">Arthrobacter siderocapsulatus</name>
    <dbReference type="NCBI Taxonomy" id="303"/>
    <lineage>
        <taxon>Bacteria</taxon>
        <taxon>Pseudomonadati</taxon>
        <taxon>Pseudomonadota</taxon>
        <taxon>Gammaproteobacteria</taxon>
        <taxon>Pseudomonadales</taxon>
        <taxon>Pseudomonadaceae</taxon>
        <taxon>Pseudomonas</taxon>
    </lineage>
</organism>
<dbReference type="EMBL" id="U56905">
    <property type="protein sequence ID" value="AAB04061.1"/>
    <property type="molecule type" value="Genomic_DNA"/>
</dbReference>
<dbReference type="RefSeq" id="WP_010952810.1">
    <property type="nucleotide sequence ID" value="NZ_VCPS01000018.1"/>
</dbReference>
<dbReference type="SMR" id="P0A129"/>
<dbReference type="GeneID" id="83681693"/>
<dbReference type="eggNOG" id="COG0776">
    <property type="taxonomic scope" value="Bacteria"/>
</dbReference>
<dbReference type="OMA" id="DQKSVPF"/>
<dbReference type="GO" id="GO:0005694">
    <property type="term" value="C:chromosome"/>
    <property type="evidence" value="ECO:0007669"/>
    <property type="project" value="InterPro"/>
</dbReference>
<dbReference type="GO" id="GO:0005829">
    <property type="term" value="C:cytosol"/>
    <property type="evidence" value="ECO:0007669"/>
    <property type="project" value="TreeGrafter"/>
</dbReference>
<dbReference type="GO" id="GO:0003677">
    <property type="term" value="F:DNA binding"/>
    <property type="evidence" value="ECO:0007669"/>
    <property type="project" value="UniProtKB-UniRule"/>
</dbReference>
<dbReference type="GO" id="GO:0030527">
    <property type="term" value="F:structural constituent of chromatin"/>
    <property type="evidence" value="ECO:0007669"/>
    <property type="project" value="InterPro"/>
</dbReference>
<dbReference type="GO" id="GO:0006310">
    <property type="term" value="P:DNA recombination"/>
    <property type="evidence" value="ECO:0007669"/>
    <property type="project" value="UniProtKB-UniRule"/>
</dbReference>
<dbReference type="GO" id="GO:0006355">
    <property type="term" value="P:regulation of DNA-templated transcription"/>
    <property type="evidence" value="ECO:0007669"/>
    <property type="project" value="UniProtKB-UniRule"/>
</dbReference>
<dbReference type="GO" id="GO:0006417">
    <property type="term" value="P:regulation of translation"/>
    <property type="evidence" value="ECO:0007669"/>
    <property type="project" value="UniProtKB-UniRule"/>
</dbReference>
<dbReference type="CDD" id="cd13836">
    <property type="entry name" value="IHF_B"/>
    <property type="match status" value="1"/>
</dbReference>
<dbReference type="FunFam" id="4.10.520.10:FF:000003">
    <property type="entry name" value="Integration host factor subunit beta"/>
    <property type="match status" value="1"/>
</dbReference>
<dbReference type="Gene3D" id="4.10.520.10">
    <property type="entry name" value="IHF-like DNA-binding proteins"/>
    <property type="match status" value="1"/>
</dbReference>
<dbReference type="HAMAP" id="MF_00381">
    <property type="entry name" value="IHF_beta"/>
    <property type="match status" value="1"/>
</dbReference>
<dbReference type="InterPro" id="IPR000119">
    <property type="entry name" value="Hist_DNA-bd"/>
</dbReference>
<dbReference type="InterPro" id="IPR020816">
    <property type="entry name" value="Histone-like_DNA-bd_CS"/>
</dbReference>
<dbReference type="InterPro" id="IPR010992">
    <property type="entry name" value="IHF-like_DNA-bd_dom_sf"/>
</dbReference>
<dbReference type="InterPro" id="IPR005685">
    <property type="entry name" value="IHF_beta"/>
</dbReference>
<dbReference type="NCBIfam" id="TIGR00988">
    <property type="entry name" value="hip"/>
    <property type="match status" value="1"/>
</dbReference>
<dbReference type="NCBIfam" id="NF001222">
    <property type="entry name" value="PRK00199.1"/>
    <property type="match status" value="1"/>
</dbReference>
<dbReference type="PANTHER" id="PTHR33175">
    <property type="entry name" value="DNA-BINDING PROTEIN HU"/>
    <property type="match status" value="1"/>
</dbReference>
<dbReference type="PANTHER" id="PTHR33175:SF5">
    <property type="entry name" value="INTEGRATION HOST FACTOR SUBUNIT BETA"/>
    <property type="match status" value="1"/>
</dbReference>
<dbReference type="Pfam" id="PF00216">
    <property type="entry name" value="Bac_DNA_binding"/>
    <property type="match status" value="1"/>
</dbReference>
<dbReference type="PRINTS" id="PR01727">
    <property type="entry name" value="DNABINDINGHU"/>
</dbReference>
<dbReference type="SMART" id="SM00411">
    <property type="entry name" value="BHL"/>
    <property type="match status" value="1"/>
</dbReference>
<dbReference type="SUPFAM" id="SSF47729">
    <property type="entry name" value="IHF-like DNA-binding proteins"/>
    <property type="match status" value="1"/>
</dbReference>
<dbReference type="PROSITE" id="PS00045">
    <property type="entry name" value="HISTONE_LIKE"/>
    <property type="match status" value="1"/>
</dbReference>
<gene>
    <name type="primary">ihfB</name>
    <name type="synonym">himD</name>
</gene>
<accession>P0A129</accession>
<accession>Q52285</accession>
<name>IHFB_PSEPU</name>
<reference key="1">
    <citation type="journal article" date="1996" name="J. Bacteriol.">
        <title>Structure and function of the Pseudomonas putida integration host factor.</title>
        <authorList>
            <person name="Calb R."/>
            <person name="Davidovitch A."/>
            <person name="Koby S."/>
            <person name="Giladi H."/>
            <person name="Goldenberg D."/>
            <person name="Margalit H."/>
            <person name="Holtel A."/>
            <person name="Timmis K.N."/>
            <person name="Sanchez-Romero J.M."/>
            <person name="de Lorenzo V."/>
            <person name="Oppenheim A.B."/>
        </authorList>
    </citation>
    <scope>NUCLEOTIDE SEQUENCE [GENOMIC DNA]</scope>
</reference>
<proteinExistence type="inferred from homology"/>